<dbReference type="EC" id="3.4.13.9"/>
<dbReference type="EC" id="3.8.2.2"/>
<dbReference type="EC" id="3.1.8.1"/>
<dbReference type="EMBL" id="U29240">
    <property type="protein sequence ID" value="AAB05590.1"/>
    <property type="molecule type" value="Genomic_DNA"/>
</dbReference>
<dbReference type="PDB" id="3L24">
    <property type="method" value="X-ray"/>
    <property type="resolution" value="2.30 A"/>
    <property type="chains" value="A/B/C=1-517"/>
</dbReference>
<dbReference type="PDB" id="3L7G">
    <property type="method" value="X-ray"/>
    <property type="resolution" value="2.70 A"/>
    <property type="chains" value="A/B/C=1-517"/>
</dbReference>
<dbReference type="PDB" id="4ZWO">
    <property type="method" value="X-ray"/>
    <property type="resolution" value="2.14 A"/>
    <property type="chains" value="A/B=1-437"/>
</dbReference>
<dbReference type="PDB" id="4ZWP">
    <property type="method" value="X-ray"/>
    <property type="resolution" value="2.40 A"/>
    <property type="chains" value="A/B=1-437"/>
</dbReference>
<dbReference type="PDB" id="4ZWU">
    <property type="method" value="X-ray"/>
    <property type="resolution" value="2.20 A"/>
    <property type="chains" value="A/B=1-437"/>
</dbReference>
<dbReference type="PDBsum" id="3L24"/>
<dbReference type="PDBsum" id="3L7G"/>
<dbReference type="PDBsum" id="4ZWO"/>
<dbReference type="PDBsum" id="4ZWP"/>
<dbReference type="PDBsum" id="4ZWU"/>
<dbReference type="SMR" id="Q44238"/>
<dbReference type="ChEMBL" id="CHEMBL4252"/>
<dbReference type="MEROPS" id="M24.003"/>
<dbReference type="BioCyc" id="MetaCyc:MONOMER-7712"/>
<dbReference type="BRENDA" id="3.1.8.2">
    <property type="organism ID" value="275"/>
</dbReference>
<dbReference type="EvolutionaryTrace" id="Q44238"/>
<dbReference type="GO" id="GO:0005829">
    <property type="term" value="C:cytosol"/>
    <property type="evidence" value="ECO:0007669"/>
    <property type="project" value="TreeGrafter"/>
</dbReference>
<dbReference type="GO" id="GO:0004177">
    <property type="term" value="F:aminopeptidase activity"/>
    <property type="evidence" value="ECO:0007669"/>
    <property type="project" value="TreeGrafter"/>
</dbReference>
<dbReference type="GO" id="GO:0004063">
    <property type="term" value="F:aryldialkylphosphatase activity"/>
    <property type="evidence" value="ECO:0007669"/>
    <property type="project" value="UniProtKB-EC"/>
</dbReference>
<dbReference type="GO" id="GO:0047862">
    <property type="term" value="F:diisopropyl-fluorophosphatase activity"/>
    <property type="evidence" value="ECO:0007669"/>
    <property type="project" value="RHEA"/>
</dbReference>
<dbReference type="GO" id="GO:0046872">
    <property type="term" value="F:metal ion binding"/>
    <property type="evidence" value="ECO:0007669"/>
    <property type="project" value="UniProtKB-KW"/>
</dbReference>
<dbReference type="GO" id="GO:0008235">
    <property type="term" value="F:metalloexopeptidase activity"/>
    <property type="evidence" value="ECO:0007669"/>
    <property type="project" value="UniProtKB-UniRule"/>
</dbReference>
<dbReference type="GO" id="GO:0102009">
    <property type="term" value="F:proline dipeptidase activity"/>
    <property type="evidence" value="ECO:0007669"/>
    <property type="project" value="UniProtKB-EC"/>
</dbReference>
<dbReference type="GO" id="GO:0006508">
    <property type="term" value="P:proteolysis"/>
    <property type="evidence" value="ECO:0007669"/>
    <property type="project" value="UniProtKB-KW"/>
</dbReference>
<dbReference type="GO" id="GO:0009636">
    <property type="term" value="P:response to toxic substance"/>
    <property type="evidence" value="ECO:0007669"/>
    <property type="project" value="UniProtKB-KW"/>
</dbReference>
<dbReference type="CDD" id="cd01087">
    <property type="entry name" value="Prolidase"/>
    <property type="match status" value="1"/>
</dbReference>
<dbReference type="Gene3D" id="3.90.230.10">
    <property type="entry name" value="Creatinase/methionine aminopeptidase superfamily"/>
    <property type="match status" value="1"/>
</dbReference>
<dbReference type="Gene3D" id="3.40.350.10">
    <property type="entry name" value="Creatinase/prolidase N-terminal domain"/>
    <property type="match status" value="1"/>
</dbReference>
<dbReference type="HAMAP" id="MF_01279">
    <property type="entry name" value="X_Pro_dipeptid"/>
    <property type="match status" value="1"/>
</dbReference>
<dbReference type="InterPro" id="IPR029149">
    <property type="entry name" value="Creatin/AminoP/Spt16_N"/>
</dbReference>
<dbReference type="InterPro" id="IPR036005">
    <property type="entry name" value="Creatinase/aminopeptidase-like"/>
</dbReference>
<dbReference type="InterPro" id="IPR048819">
    <property type="entry name" value="PepQ_N"/>
</dbReference>
<dbReference type="InterPro" id="IPR000994">
    <property type="entry name" value="Pept_M24"/>
</dbReference>
<dbReference type="InterPro" id="IPR001131">
    <property type="entry name" value="Peptidase_M24B_aminopep-P_CS"/>
</dbReference>
<dbReference type="InterPro" id="IPR052433">
    <property type="entry name" value="X-Pro_dipept-like"/>
</dbReference>
<dbReference type="InterPro" id="IPR022846">
    <property type="entry name" value="X_Pro_dipept"/>
</dbReference>
<dbReference type="NCBIfam" id="NF010133">
    <property type="entry name" value="PRK13607.1"/>
    <property type="match status" value="1"/>
</dbReference>
<dbReference type="PANTHER" id="PTHR43226">
    <property type="entry name" value="XAA-PRO AMINOPEPTIDASE 3"/>
    <property type="match status" value="1"/>
</dbReference>
<dbReference type="PANTHER" id="PTHR43226:SF8">
    <property type="entry name" value="XAA-PRO DIPEPTIDASE"/>
    <property type="match status" value="1"/>
</dbReference>
<dbReference type="Pfam" id="PF21216">
    <property type="entry name" value="PepQ_N"/>
    <property type="match status" value="1"/>
</dbReference>
<dbReference type="Pfam" id="PF00557">
    <property type="entry name" value="Peptidase_M24"/>
    <property type="match status" value="1"/>
</dbReference>
<dbReference type="SUPFAM" id="SSF55920">
    <property type="entry name" value="Creatinase/aminopeptidase"/>
    <property type="match status" value="1"/>
</dbReference>
<dbReference type="PROSITE" id="PS00491">
    <property type="entry name" value="PROLINE_PEPTIDASE"/>
    <property type="match status" value="1"/>
</dbReference>
<evidence type="ECO:0000250" key="1"/>
<evidence type="ECO:0000269" key="2">
    <source>
    </source>
</evidence>
<evidence type="ECO:0000269" key="3">
    <source>
    </source>
</evidence>
<evidence type="ECO:0000269" key="4">
    <source>
    </source>
</evidence>
<evidence type="ECO:0000269" key="5">
    <source>
    </source>
</evidence>
<evidence type="ECO:0000305" key="6"/>
<evidence type="ECO:0007829" key="7">
    <source>
        <dbReference type="PDB" id="3L24"/>
    </source>
</evidence>
<evidence type="ECO:0007829" key="8">
    <source>
        <dbReference type="PDB" id="3L7G"/>
    </source>
</evidence>
<evidence type="ECO:0007829" key="9">
    <source>
        <dbReference type="PDB" id="4ZWO"/>
    </source>
</evidence>
<evidence type="ECO:0007829" key="10">
    <source>
        <dbReference type="PDB" id="4ZWP"/>
    </source>
</evidence>
<evidence type="ECO:0007829" key="11">
    <source>
        <dbReference type="PDB" id="4ZWU"/>
    </source>
</evidence>
<accession>Q44238</accession>
<organism>
    <name type="scientific">Alteromonas sp</name>
    <dbReference type="NCBI Taxonomy" id="232"/>
    <lineage>
        <taxon>Bacteria</taxon>
        <taxon>Pseudomonadati</taxon>
        <taxon>Pseudomonadota</taxon>
        <taxon>Gammaproteobacteria</taxon>
        <taxon>Alteromonadales</taxon>
        <taxon>Alteromonadaceae</taxon>
        <taxon>Alteromonas/Salinimonas group</taxon>
        <taxon>Alteromonas</taxon>
    </lineage>
</organism>
<proteinExistence type="evidence at protein level"/>
<sequence>MNKLAVLYAEHIATLQKRTREIIERENLDGVVFHSGQAKRQFLDDMYYPFKVNPQFKAWLPVIDNPHCWIVANGTDKPKLIFYRPVDFWHKVPDEPNEYWADYFDIELLVKPDQVEKLLPYDKARFAYIGEYLEVAQALGFELMNPEPVMNFYHYHRAYKTQYELACMREANKIAVQGHKAARDAFFQGKSEFEIQQAYLLATQHSENDNAYGNIVALNENCAILHYTHFDRVAPATHRSFLIDAGANFNGYAADITRTYDFTGEGEFAELVATMKQHQIALCNQLAPGKLYGELHLDCHQRVAQTLSDFNIVDLSADEIVAKGITSTFFPHGLGHHIGLQVHDVGGFMADEQGAHQEPPEGHPFLRCTRKIEANQVFTIEPGLYFIDSLLGDLAATDNNQHINWDKVAELKPFGGIRIEDNIIVHEDSLENMTRELRARLTTHSLRGLSAPQFSINDPAVMSEYSYPSEPLSYEEEIKKSTFIVHVRTRRILVRRRTLSPILIAVTPMPAITAGLM</sequence>
<feature type="chain" id="PRO_0000298944" description="Xaa-Pro dipeptidase">
    <location>
        <begin position="1"/>
        <end position="517"/>
    </location>
</feature>
<feature type="binding site" evidence="1">
    <location>
        <position position="244"/>
    </location>
    <ligand>
        <name>Mn(2+)</name>
        <dbReference type="ChEBI" id="CHEBI:29035"/>
        <label>2</label>
    </ligand>
</feature>
<feature type="binding site" evidence="1">
    <location>
        <position position="255"/>
    </location>
    <ligand>
        <name>Mn(2+)</name>
        <dbReference type="ChEBI" id="CHEBI:29035"/>
        <label>1</label>
    </ligand>
</feature>
<feature type="binding site" evidence="1">
    <location>
        <position position="255"/>
    </location>
    <ligand>
        <name>Mn(2+)</name>
        <dbReference type="ChEBI" id="CHEBI:29035"/>
        <label>2</label>
    </ligand>
</feature>
<feature type="binding site" evidence="1">
    <location>
        <position position="336"/>
    </location>
    <ligand>
        <name>Mn(2+)</name>
        <dbReference type="ChEBI" id="CHEBI:29035"/>
        <label>1</label>
    </ligand>
</feature>
<feature type="binding site" evidence="1">
    <location>
        <position position="381"/>
    </location>
    <ligand>
        <name>Mn(2+)</name>
        <dbReference type="ChEBI" id="CHEBI:29035"/>
        <label>1</label>
    </ligand>
</feature>
<feature type="binding site" evidence="1">
    <location>
        <position position="420"/>
    </location>
    <ligand>
        <name>Mn(2+)</name>
        <dbReference type="ChEBI" id="CHEBI:29035"/>
        <label>1</label>
    </ligand>
</feature>
<feature type="binding site" evidence="1">
    <location>
        <position position="420"/>
    </location>
    <ligand>
        <name>Mn(2+)</name>
        <dbReference type="ChEBI" id="CHEBI:29035"/>
        <label>2</label>
    </ligand>
</feature>
<feature type="helix" evidence="9">
    <location>
        <begin position="3"/>
        <end position="25"/>
    </location>
</feature>
<feature type="strand" evidence="9">
    <location>
        <begin position="29"/>
        <end position="34"/>
    </location>
</feature>
<feature type="helix" evidence="9">
    <location>
        <begin position="54"/>
        <end position="57"/>
    </location>
</feature>
<feature type="strand" evidence="9">
    <location>
        <begin position="69"/>
        <end position="72"/>
    </location>
</feature>
<feature type="strand" evidence="9">
    <location>
        <begin position="74"/>
        <end position="76"/>
    </location>
</feature>
<feature type="strand" evidence="9">
    <location>
        <begin position="79"/>
        <end position="83"/>
    </location>
</feature>
<feature type="strand" evidence="7">
    <location>
        <begin position="88"/>
        <end position="90"/>
    </location>
</feature>
<feature type="helix" evidence="9">
    <location>
        <begin position="99"/>
        <end position="103"/>
    </location>
</feature>
<feature type="strand" evidence="9">
    <location>
        <begin position="104"/>
        <end position="111"/>
    </location>
</feature>
<feature type="helix" evidence="9">
    <location>
        <begin position="112"/>
        <end position="117"/>
    </location>
</feature>
<feature type="helix" evidence="10">
    <location>
        <begin position="123"/>
        <end position="125"/>
    </location>
</feature>
<feature type="strand" evidence="9">
    <location>
        <begin position="126"/>
        <end position="131"/>
    </location>
</feature>
<feature type="helix" evidence="9">
    <location>
        <begin position="133"/>
        <end position="139"/>
    </location>
</feature>
<feature type="strand" evidence="9">
    <location>
        <begin position="143"/>
        <end position="145"/>
    </location>
</feature>
<feature type="helix" evidence="9">
    <location>
        <begin position="147"/>
        <end position="156"/>
    </location>
</feature>
<feature type="helix" evidence="9">
    <location>
        <begin position="162"/>
        <end position="187"/>
    </location>
</feature>
<feature type="helix" evidence="9">
    <location>
        <begin position="192"/>
        <end position="203"/>
    </location>
</feature>
<feature type="helix" evidence="9">
    <location>
        <begin position="207"/>
        <end position="209"/>
    </location>
</feature>
<feature type="strand" evidence="9">
    <location>
        <begin position="210"/>
        <end position="212"/>
    </location>
</feature>
<feature type="strand" evidence="9">
    <location>
        <begin position="215"/>
        <end position="218"/>
    </location>
</feature>
<feature type="helix" evidence="9">
    <location>
        <begin position="219"/>
        <end position="223"/>
    </location>
</feature>
<feature type="strand" evidence="9">
    <location>
        <begin position="240"/>
        <end position="245"/>
    </location>
</feature>
<feature type="strand" evidence="9">
    <location>
        <begin position="256"/>
        <end position="264"/>
    </location>
</feature>
<feature type="helix" evidence="9">
    <location>
        <begin position="267"/>
        <end position="283"/>
    </location>
</feature>
<feature type="helix" evidence="9">
    <location>
        <begin position="292"/>
        <end position="309"/>
    </location>
</feature>
<feature type="strand" evidence="9">
    <location>
        <begin position="312"/>
        <end position="315"/>
    </location>
</feature>
<feature type="helix" evidence="9">
    <location>
        <begin position="317"/>
        <end position="322"/>
    </location>
</feature>
<feature type="turn" evidence="11">
    <location>
        <begin position="323"/>
        <end position="325"/>
    </location>
</feature>
<feature type="helix" evidence="9">
    <location>
        <begin position="326"/>
        <end position="329"/>
    </location>
</feature>
<feature type="strand" evidence="10">
    <location>
        <begin position="334"/>
        <end position="337"/>
    </location>
</feature>
<feature type="strand" evidence="9">
    <location>
        <begin position="339"/>
        <end position="343"/>
    </location>
</feature>
<feature type="strand" evidence="11">
    <location>
        <begin position="347"/>
        <end position="351"/>
    </location>
</feature>
<feature type="strand" evidence="9">
    <location>
        <begin position="376"/>
        <end position="380"/>
    </location>
</feature>
<feature type="strand" evidence="9">
    <location>
        <begin position="383"/>
        <end position="385"/>
    </location>
</feature>
<feature type="helix" evidence="9">
    <location>
        <begin position="388"/>
        <end position="395"/>
    </location>
</feature>
<feature type="turn" evidence="8">
    <location>
        <begin position="396"/>
        <end position="399"/>
    </location>
</feature>
<feature type="helix" evidence="9">
    <location>
        <begin position="400"/>
        <end position="402"/>
    </location>
</feature>
<feature type="helix" evidence="9">
    <location>
        <begin position="405"/>
        <end position="411"/>
    </location>
</feature>
<feature type="helix" evidence="9">
    <location>
        <begin position="412"/>
        <end position="414"/>
    </location>
</feature>
<feature type="strand" evidence="9">
    <location>
        <begin position="416"/>
        <end position="418"/>
    </location>
</feature>
<feature type="strand" evidence="9">
    <location>
        <begin position="420"/>
        <end position="425"/>
    </location>
</feature>
<feature type="strand" evidence="9">
    <location>
        <begin position="430"/>
        <end position="432"/>
    </location>
</feature>
<feature type="helix" evidence="9">
    <location>
        <begin position="433"/>
        <end position="436"/>
    </location>
</feature>
<protein>
    <recommendedName>
        <fullName>Xaa-Pro dipeptidase</fullName>
        <shortName>X-Pro dipeptidase</shortName>
        <ecNumber>3.4.13.9</ecNumber>
    </recommendedName>
    <alternativeName>
        <fullName>DFPase</fullName>
    </alternativeName>
    <alternativeName>
        <fullName>Imidodipeptidase</fullName>
    </alternativeName>
    <alternativeName>
        <fullName>Organophosphorus acid anhydrolase 2</fullName>
        <shortName>OPAA-2</shortName>
        <ecNumber>3.8.2.2</ecNumber>
    </alternativeName>
    <alternativeName>
        <fullName>Paraoxon hydrolase</fullName>
    </alternativeName>
    <alternativeName>
        <fullName>Phosphotriesterase</fullName>
        <ecNumber>3.1.8.1</ecNumber>
    </alternativeName>
    <alternativeName>
        <fullName>Proline dipeptidase</fullName>
        <shortName>Prolidase</shortName>
    </alternativeName>
</protein>
<name>PEPQ_ALTSX</name>
<comment type="function">
    <text evidence="2 3 4 5">Splits dipeptides with a prolyl or hydroxyprolyl residue in the C-terminal position and a nonpolar amino acid at the N-terminal position. Also catalyzes the hydrolysis of toxic organophosphorus cholinesterase-inhibiting compounds including insecticide paraoxon and nerve gases such as diisopropylfluorophosphate (DFP), O-isopropyl methylphosphonofluoridate (sarin), O-pinacolyl methylphosphonofluoridate (soman), and O-cyclohexyl methylphosphonofluoridate.</text>
</comment>
<comment type="catalytic activity">
    <reaction>
        <text>Xaa-L-Pro dipeptide + H2O = an L-alpha-amino acid + L-proline</text>
        <dbReference type="Rhea" id="RHEA:76407"/>
        <dbReference type="ChEBI" id="CHEBI:15377"/>
        <dbReference type="ChEBI" id="CHEBI:59869"/>
        <dbReference type="ChEBI" id="CHEBI:60039"/>
        <dbReference type="ChEBI" id="CHEBI:195196"/>
        <dbReference type="EC" id="3.4.13.9"/>
    </reaction>
</comment>
<comment type="catalytic activity">
    <reaction>
        <text>diisopropyl fluorophosphate + H2O = diisopropyl phosphate + fluoride + 2 H(+)</text>
        <dbReference type="Rhea" id="RHEA:24100"/>
        <dbReference type="ChEBI" id="CHEBI:15377"/>
        <dbReference type="ChEBI" id="CHEBI:15378"/>
        <dbReference type="ChEBI" id="CHEBI:17051"/>
        <dbReference type="ChEBI" id="CHEBI:17941"/>
        <dbReference type="ChEBI" id="CHEBI:57896"/>
        <dbReference type="EC" id="3.8.2.2"/>
    </reaction>
</comment>
<comment type="catalytic activity">
    <reaction>
        <text>An aryl dialkyl phosphate + H2O = dialkyl phosphate + an aryl alcohol.</text>
        <dbReference type="EC" id="3.1.8.1"/>
    </reaction>
</comment>
<comment type="cofactor">
    <cofactor evidence="4">
        <name>Mn(2+)</name>
        <dbReference type="ChEBI" id="CHEBI:29035"/>
    </cofactor>
    <text evidence="4">Binds 2 manganese ions per monomer.</text>
</comment>
<comment type="biophysicochemical properties">
    <kinetics>
        <KM evidence="3 4">2.99 mM for diisopropylfluorophosphate</KM>
        <KM evidence="3 4">1.57 mM for O-isopropyl methylphosphonofluoridate</KM>
        <KM evidence="3 4">2.48 mM for O-pinacolyl methylphosphonofluoridate</KM>
        <KM evidence="3 4">0.63 mM for O-cyclohexyl methylphosphonofluoridate</KM>
        <KM evidence="3 4">1.27 mM for a chromogenic soman analog</KM>
        <Vmax evidence="3 4">230.0 umol/min/mg enzyme with diisopropylfluorophosphate as substrate</Vmax>
        <Vmax evidence="3 4">442.0 umol/min/mg enzyme with O-isopropyl methylphosphonofluoridate as substrate</Vmax>
        <Vmax evidence="3 4">151.0 umol/min/mg enzyme with O-pinacolyl methylphosphonofluoridate as substrate</Vmax>
        <Vmax evidence="3 4">652.0 umol/min/mg enzyme with O-cyclohexyl methylphosphonofluoridate as substrate</Vmax>
        <Vmax evidence="3 4">52.0 umol/min/mg enzyme with a chromogenic soman analog as substrate</Vmax>
    </kinetics>
    <phDependence>
        <text evidence="3 4">Optimum pH is 8.5 with DFP as substrate.</text>
    </phDependence>
    <temperatureDependence>
        <text evidence="3 4">Optimum temperature is 50 degrees Celsius.</text>
    </temperatureDependence>
</comment>
<comment type="subunit">
    <text evidence="3">Monomer.</text>
</comment>
<comment type="biotechnology">
    <text>Can be used for the catalytic detoxification of some nerve agents neurotoxins.</text>
</comment>
<comment type="miscellaneous">
    <text>Has a stereoselective preference for isomers with R-configuration at the phosphorous center of sarin and soman, and with S-configuration in phosphotriesters.</text>
</comment>
<comment type="similarity">
    <text evidence="6">Belongs to the peptidase M24B family. Bacterial-type prolidase subfamily.</text>
</comment>
<keyword id="KW-0002">3D-structure</keyword>
<keyword id="KW-0216">Detoxification</keyword>
<keyword id="KW-0224">Dipeptidase</keyword>
<keyword id="KW-0378">Hydrolase</keyword>
<keyword id="KW-0464">Manganese</keyword>
<keyword id="KW-0479">Metal-binding</keyword>
<keyword id="KW-0482">Metalloprotease</keyword>
<keyword id="KW-0645">Protease</keyword>
<reference key="1">
    <citation type="journal article" date="1996" name="Appl. Environ. Microbiol.">
        <title>Cloning and expression of a gene encoding a bacterial enzyme for decontamination of organophosphorus nerve agents and nucleotide sequence of the enzyme.</title>
        <authorList>
            <person name="Cheng T.-C."/>
            <person name="Harvey S.P."/>
            <person name="Chen G.L."/>
        </authorList>
    </citation>
    <scope>NUCLEOTIDE SEQUENCE [GENOMIC DNA]</scope>
    <scope>FUNCTION</scope>
    <scope>COFACTOR</scope>
    <scope>BIOPHYSICOCHEMICAL PROPERTIES</scope>
    <source>
        <strain>JD6.5</strain>
    </source>
</reference>
<reference key="2">
    <citation type="journal article" date="1991" name="J. Bacteriol.">
        <title>Purification and properties of an organophosphorus acid anhydrase from a halophilic bacterial isolate.</title>
        <authorList>
            <person name="DeFrank J.J."/>
            <person name="Cheng T.-C."/>
        </authorList>
    </citation>
    <scope>FUNCTION</scope>
    <scope>SUBUNIT</scope>
    <scope>BIOPHYSICOCHEMICAL PROPERTIES</scope>
    <source>
        <strain>JD6.5</strain>
    </source>
</reference>
<reference key="3">
    <citation type="journal article" date="1997" name="J. Ind. Microbiol. Biotechnol.">
        <title>Nucleotide sequence of a gene encoding an organophosphorus nerve agent degrading enzyme from Alteromonas haloplanktis.</title>
        <authorList>
            <person name="Cheng T.-C."/>
            <person name="Liu L."/>
            <person name="Wang B."/>
            <person name="Wu J."/>
            <person name="DeFrank J.J."/>
            <person name="Anderson D.M."/>
            <person name="Rastogi V.K."/>
            <person name="Hamilton A.B."/>
        </authorList>
    </citation>
    <scope>FUNCTION</scope>
    <source>
        <strain>JD6.5</strain>
    </source>
</reference>
<reference key="4">
    <citation type="journal article" date="2000" name="Bioorg. Med. Chem. Lett.">
        <title>Substrate and stereochemical specificity of the organophosphorus acid anhydrolase from Alteromonas sp. JD6.5 toward p-nitrophenyl phosphotriesters.</title>
        <authorList>
            <person name="Hill C.M."/>
            <person name="Wu F."/>
            <person name="Cheng T.-C."/>
            <person name="DeFrank J.J."/>
            <person name="Raushel F.M."/>
        </authorList>
    </citation>
    <scope>FUNCTION</scope>
    <scope>SUBSTRATE SPECIFICITY</scope>
    <scope>STEREOSELECTIVITY</scope>
    <source>
        <strain>JD6.5</strain>
    </source>
</reference>
<reference key="5">
    <citation type="journal article" date="2001" name="Bioorg. Chem.">
        <title>Stereochemical specificity of organophosphorus acid anhydrolase toward p-nitrophenyl analogs of soman and sarin.</title>
        <authorList>
            <person name="Hill C.M."/>
            <person name="Li W.-S."/>
            <person name="Cheng T.-C."/>
            <person name="DeFrank J.J."/>
            <person name="Raushel F.M."/>
        </authorList>
    </citation>
    <scope>STEREOSELECTIVITY</scope>
</reference>
<gene>
    <name type="primary">pepQ</name>
    <name type="synonym">opaA</name>
</gene>